<name>FLUC2_YERPS</name>
<feature type="chain" id="PRO_0000110219" description="Fluoride-specific ion channel FluC 2">
    <location>
        <begin position="1"/>
        <end position="126"/>
    </location>
</feature>
<feature type="transmembrane region" description="Helical" evidence="1">
    <location>
        <begin position="7"/>
        <end position="27"/>
    </location>
</feature>
<feature type="transmembrane region" description="Helical" evidence="1">
    <location>
        <begin position="37"/>
        <end position="57"/>
    </location>
</feature>
<feature type="transmembrane region" description="Helical" evidence="1">
    <location>
        <begin position="65"/>
        <end position="85"/>
    </location>
</feature>
<feature type="transmembrane region" description="Helical" evidence="1">
    <location>
        <begin position="101"/>
        <end position="121"/>
    </location>
</feature>
<feature type="binding site" evidence="1">
    <location>
        <position position="79"/>
    </location>
    <ligand>
        <name>Na(+)</name>
        <dbReference type="ChEBI" id="CHEBI:29101"/>
        <note>structural</note>
    </ligand>
</feature>
<feature type="binding site" evidence="1">
    <location>
        <position position="82"/>
    </location>
    <ligand>
        <name>Na(+)</name>
        <dbReference type="ChEBI" id="CHEBI:29101"/>
        <note>structural</note>
    </ligand>
</feature>
<gene>
    <name evidence="1" type="primary">fluC2</name>
    <name evidence="1" type="synonym">crcB2</name>
    <name type="ordered locus">YPTB2932</name>
</gene>
<sequence length="126" mass="13315">MTAIDVMWVGLGGGIGSLLRWWIGLSIGKVYKGNFPLGTFLINISGAFVIGYLSILFSVDWRDRYGDLMNAAVLTGILGGYTTFSSMQLDAAKLATARGRAIAAGYLIISVLVGLAAAAFGAWLAY</sequence>
<proteinExistence type="inferred from homology"/>
<organism>
    <name type="scientific">Yersinia pseudotuberculosis serotype I (strain IP32953)</name>
    <dbReference type="NCBI Taxonomy" id="273123"/>
    <lineage>
        <taxon>Bacteria</taxon>
        <taxon>Pseudomonadati</taxon>
        <taxon>Pseudomonadota</taxon>
        <taxon>Gammaproteobacteria</taxon>
        <taxon>Enterobacterales</taxon>
        <taxon>Yersiniaceae</taxon>
        <taxon>Yersinia</taxon>
    </lineage>
</organism>
<dbReference type="EMBL" id="BX936398">
    <property type="protein sequence ID" value="CAH22170.1"/>
    <property type="molecule type" value="Genomic_DNA"/>
</dbReference>
<dbReference type="RefSeq" id="WP_011192838.1">
    <property type="nucleotide sequence ID" value="NC_006155.1"/>
</dbReference>
<dbReference type="SMR" id="Q667R0"/>
<dbReference type="GeneID" id="49785056"/>
<dbReference type="KEGG" id="ypo:BZ17_3696"/>
<dbReference type="KEGG" id="yps:YPTB2932"/>
<dbReference type="PATRIC" id="fig|273123.14.peg.3874"/>
<dbReference type="Proteomes" id="UP000001011">
    <property type="component" value="Chromosome"/>
</dbReference>
<dbReference type="GO" id="GO:0005886">
    <property type="term" value="C:plasma membrane"/>
    <property type="evidence" value="ECO:0007669"/>
    <property type="project" value="UniProtKB-SubCell"/>
</dbReference>
<dbReference type="GO" id="GO:0062054">
    <property type="term" value="F:fluoride channel activity"/>
    <property type="evidence" value="ECO:0007669"/>
    <property type="project" value="UniProtKB-UniRule"/>
</dbReference>
<dbReference type="GO" id="GO:0046872">
    <property type="term" value="F:metal ion binding"/>
    <property type="evidence" value="ECO:0007669"/>
    <property type="project" value="UniProtKB-KW"/>
</dbReference>
<dbReference type="GO" id="GO:0140114">
    <property type="term" value="P:cellular detoxification of fluoride"/>
    <property type="evidence" value="ECO:0007669"/>
    <property type="project" value="UniProtKB-UniRule"/>
</dbReference>
<dbReference type="HAMAP" id="MF_00454">
    <property type="entry name" value="FluC"/>
    <property type="match status" value="1"/>
</dbReference>
<dbReference type="InterPro" id="IPR003691">
    <property type="entry name" value="FluC"/>
</dbReference>
<dbReference type="NCBIfam" id="TIGR00494">
    <property type="entry name" value="crcB"/>
    <property type="match status" value="1"/>
</dbReference>
<dbReference type="PANTHER" id="PTHR28259">
    <property type="entry name" value="FLUORIDE EXPORT PROTEIN 1-RELATED"/>
    <property type="match status" value="1"/>
</dbReference>
<dbReference type="PANTHER" id="PTHR28259:SF18">
    <property type="entry name" value="FLUORIDE-SPECIFIC ION CHANNEL FLUC"/>
    <property type="match status" value="1"/>
</dbReference>
<dbReference type="Pfam" id="PF02537">
    <property type="entry name" value="CRCB"/>
    <property type="match status" value="1"/>
</dbReference>
<comment type="function">
    <text evidence="1">Fluoride-specific ion channel. Important for reducing fluoride concentration in the cell, thus reducing its toxicity.</text>
</comment>
<comment type="catalytic activity">
    <reaction evidence="1">
        <text>fluoride(in) = fluoride(out)</text>
        <dbReference type="Rhea" id="RHEA:76159"/>
        <dbReference type="ChEBI" id="CHEBI:17051"/>
    </reaction>
    <physiologicalReaction direction="left-to-right" evidence="1">
        <dbReference type="Rhea" id="RHEA:76160"/>
    </physiologicalReaction>
</comment>
<comment type="activity regulation">
    <text evidence="1">Na(+) is not transported, but it plays an essential structural role and its presence is essential for fluoride channel function.</text>
</comment>
<comment type="subcellular location">
    <subcellularLocation>
        <location evidence="1">Cell inner membrane</location>
        <topology evidence="1">Multi-pass membrane protein</topology>
    </subcellularLocation>
</comment>
<comment type="similarity">
    <text evidence="1">Belongs to the fluoride channel Fluc/FEX (TC 1.A.43) family.</text>
</comment>
<evidence type="ECO:0000255" key="1">
    <source>
        <dbReference type="HAMAP-Rule" id="MF_00454"/>
    </source>
</evidence>
<keyword id="KW-0997">Cell inner membrane</keyword>
<keyword id="KW-1003">Cell membrane</keyword>
<keyword id="KW-0407">Ion channel</keyword>
<keyword id="KW-0406">Ion transport</keyword>
<keyword id="KW-0472">Membrane</keyword>
<keyword id="KW-0479">Metal-binding</keyword>
<keyword id="KW-0915">Sodium</keyword>
<keyword id="KW-0812">Transmembrane</keyword>
<keyword id="KW-1133">Transmembrane helix</keyword>
<keyword id="KW-0813">Transport</keyword>
<protein>
    <recommendedName>
        <fullName evidence="1">Fluoride-specific ion channel FluC 2</fullName>
    </recommendedName>
</protein>
<reference key="1">
    <citation type="journal article" date="2004" name="Proc. Natl. Acad. Sci. U.S.A.">
        <title>Insights into the evolution of Yersinia pestis through whole-genome comparison with Yersinia pseudotuberculosis.</title>
        <authorList>
            <person name="Chain P.S.G."/>
            <person name="Carniel E."/>
            <person name="Larimer F.W."/>
            <person name="Lamerdin J."/>
            <person name="Stoutland P.O."/>
            <person name="Regala W.M."/>
            <person name="Georgescu A.M."/>
            <person name="Vergez L.M."/>
            <person name="Land M.L."/>
            <person name="Motin V.L."/>
            <person name="Brubaker R.R."/>
            <person name="Fowler J."/>
            <person name="Hinnebusch J."/>
            <person name="Marceau M."/>
            <person name="Medigue C."/>
            <person name="Simonet M."/>
            <person name="Chenal-Francisque V."/>
            <person name="Souza B."/>
            <person name="Dacheux D."/>
            <person name="Elliott J.M."/>
            <person name="Derbise A."/>
            <person name="Hauser L.J."/>
            <person name="Garcia E."/>
        </authorList>
    </citation>
    <scope>NUCLEOTIDE SEQUENCE [LARGE SCALE GENOMIC DNA]</scope>
    <source>
        <strain>IP32953</strain>
    </source>
</reference>
<accession>Q667R0</accession>